<evidence type="ECO:0000255" key="1">
    <source>
        <dbReference type="HAMAP-Rule" id="MF_01369"/>
    </source>
</evidence>
<evidence type="ECO:0000305" key="2"/>
<proteinExistence type="inferred from homology"/>
<name>RL23_TREDE</name>
<protein>
    <recommendedName>
        <fullName evidence="1">Large ribosomal subunit protein uL23</fullName>
    </recommendedName>
    <alternativeName>
        <fullName evidence="2">50S ribosomal protein L23</fullName>
    </alternativeName>
</protein>
<feature type="chain" id="PRO_0000272866" description="Large ribosomal subunit protein uL23">
    <location>
        <begin position="1"/>
        <end position="94"/>
    </location>
</feature>
<organism>
    <name type="scientific">Treponema denticola (strain ATCC 35405 / DSM 14222 / CIP 103919 / JCM 8153 / KCTC 15104)</name>
    <dbReference type="NCBI Taxonomy" id="243275"/>
    <lineage>
        <taxon>Bacteria</taxon>
        <taxon>Pseudomonadati</taxon>
        <taxon>Spirochaetota</taxon>
        <taxon>Spirochaetia</taxon>
        <taxon>Spirochaetales</taxon>
        <taxon>Treponemataceae</taxon>
        <taxon>Treponema</taxon>
    </lineage>
</organism>
<sequence>MEYNDILIAPVLTEKSTELREQGKYVFKVAPKATKIQIKEAVRRLFNVKVTDCTVVNVRGKTKRLRYKEGKTSSWKKATVKLAKGETIKIFEGA</sequence>
<accession>Q73PN0</accession>
<keyword id="KW-1185">Reference proteome</keyword>
<keyword id="KW-0687">Ribonucleoprotein</keyword>
<keyword id="KW-0689">Ribosomal protein</keyword>
<keyword id="KW-0694">RNA-binding</keyword>
<keyword id="KW-0699">rRNA-binding</keyword>
<dbReference type="EMBL" id="AE017226">
    <property type="protein sequence ID" value="AAS11260.1"/>
    <property type="molecule type" value="Genomic_DNA"/>
</dbReference>
<dbReference type="RefSeq" id="NP_971379.1">
    <property type="nucleotide sequence ID" value="NC_002967.9"/>
</dbReference>
<dbReference type="RefSeq" id="WP_002672216.1">
    <property type="nucleotide sequence ID" value="NC_002967.9"/>
</dbReference>
<dbReference type="SMR" id="Q73PN0"/>
<dbReference type="STRING" id="243275.TDE_0769"/>
<dbReference type="PaxDb" id="243275-TDE_0769"/>
<dbReference type="GeneID" id="2740309"/>
<dbReference type="KEGG" id="tde:TDE_0769"/>
<dbReference type="PATRIC" id="fig|243275.7.peg.742"/>
<dbReference type="eggNOG" id="COG0089">
    <property type="taxonomic scope" value="Bacteria"/>
</dbReference>
<dbReference type="HOGENOM" id="CLU_037562_3_2_12"/>
<dbReference type="OrthoDB" id="9793353at2"/>
<dbReference type="Proteomes" id="UP000008212">
    <property type="component" value="Chromosome"/>
</dbReference>
<dbReference type="GO" id="GO:1990904">
    <property type="term" value="C:ribonucleoprotein complex"/>
    <property type="evidence" value="ECO:0007669"/>
    <property type="project" value="UniProtKB-KW"/>
</dbReference>
<dbReference type="GO" id="GO:0005840">
    <property type="term" value="C:ribosome"/>
    <property type="evidence" value="ECO:0007669"/>
    <property type="project" value="UniProtKB-KW"/>
</dbReference>
<dbReference type="GO" id="GO:0019843">
    <property type="term" value="F:rRNA binding"/>
    <property type="evidence" value="ECO:0007669"/>
    <property type="project" value="UniProtKB-UniRule"/>
</dbReference>
<dbReference type="GO" id="GO:0003735">
    <property type="term" value="F:structural constituent of ribosome"/>
    <property type="evidence" value="ECO:0007669"/>
    <property type="project" value="InterPro"/>
</dbReference>
<dbReference type="GO" id="GO:0006412">
    <property type="term" value="P:translation"/>
    <property type="evidence" value="ECO:0007669"/>
    <property type="project" value="UniProtKB-UniRule"/>
</dbReference>
<dbReference type="FunFam" id="3.30.70.330:FF:000001">
    <property type="entry name" value="50S ribosomal protein L23"/>
    <property type="match status" value="1"/>
</dbReference>
<dbReference type="Gene3D" id="3.30.70.330">
    <property type="match status" value="1"/>
</dbReference>
<dbReference type="HAMAP" id="MF_01369_B">
    <property type="entry name" value="Ribosomal_uL23_B"/>
    <property type="match status" value="1"/>
</dbReference>
<dbReference type="InterPro" id="IPR012677">
    <property type="entry name" value="Nucleotide-bd_a/b_plait_sf"/>
</dbReference>
<dbReference type="InterPro" id="IPR013025">
    <property type="entry name" value="Ribosomal_uL23-like"/>
</dbReference>
<dbReference type="InterPro" id="IPR012678">
    <property type="entry name" value="Ribosomal_uL23/eL15/eS24_sf"/>
</dbReference>
<dbReference type="InterPro" id="IPR001014">
    <property type="entry name" value="Ribosomal_uL23_CS"/>
</dbReference>
<dbReference type="NCBIfam" id="NF004359">
    <property type="entry name" value="PRK05738.1-3"/>
    <property type="match status" value="1"/>
</dbReference>
<dbReference type="NCBIfam" id="NF004363">
    <property type="entry name" value="PRK05738.2-4"/>
    <property type="match status" value="1"/>
</dbReference>
<dbReference type="NCBIfam" id="NF004366">
    <property type="entry name" value="PRK05738.3-2"/>
    <property type="match status" value="1"/>
</dbReference>
<dbReference type="Pfam" id="PF00276">
    <property type="entry name" value="Ribosomal_L23"/>
    <property type="match status" value="1"/>
</dbReference>
<dbReference type="SUPFAM" id="SSF54189">
    <property type="entry name" value="Ribosomal proteins S24e, L23 and L15e"/>
    <property type="match status" value="1"/>
</dbReference>
<dbReference type="PROSITE" id="PS00050">
    <property type="entry name" value="RIBOSOMAL_L23"/>
    <property type="match status" value="1"/>
</dbReference>
<reference key="1">
    <citation type="journal article" date="2004" name="Proc. Natl. Acad. Sci. U.S.A.">
        <title>Comparison of the genome of the oral pathogen Treponema denticola with other spirochete genomes.</title>
        <authorList>
            <person name="Seshadri R."/>
            <person name="Myers G.S.A."/>
            <person name="Tettelin H."/>
            <person name="Eisen J.A."/>
            <person name="Heidelberg J.F."/>
            <person name="Dodson R.J."/>
            <person name="Davidsen T.M."/>
            <person name="DeBoy R.T."/>
            <person name="Fouts D.E."/>
            <person name="Haft D.H."/>
            <person name="Selengut J."/>
            <person name="Ren Q."/>
            <person name="Brinkac L.M."/>
            <person name="Madupu R."/>
            <person name="Kolonay J.F."/>
            <person name="Durkin S.A."/>
            <person name="Daugherty S.C."/>
            <person name="Shetty J."/>
            <person name="Shvartsbeyn A."/>
            <person name="Gebregeorgis E."/>
            <person name="Geer K."/>
            <person name="Tsegaye G."/>
            <person name="Malek J.A."/>
            <person name="Ayodeji B."/>
            <person name="Shatsman S."/>
            <person name="McLeod M.P."/>
            <person name="Smajs D."/>
            <person name="Howell J.K."/>
            <person name="Pal S."/>
            <person name="Amin A."/>
            <person name="Vashisth P."/>
            <person name="McNeill T.Z."/>
            <person name="Xiang Q."/>
            <person name="Sodergren E."/>
            <person name="Baca E."/>
            <person name="Weinstock G.M."/>
            <person name="Norris S.J."/>
            <person name="Fraser C.M."/>
            <person name="Paulsen I.T."/>
        </authorList>
    </citation>
    <scope>NUCLEOTIDE SEQUENCE [LARGE SCALE GENOMIC DNA]</scope>
    <source>
        <strain>ATCC 35405 / DSM 14222 / CIP 103919 / JCM 8153 / KCTC 15104</strain>
    </source>
</reference>
<gene>
    <name evidence="1" type="primary">rplW</name>
    <name type="ordered locus">TDE_0769</name>
</gene>
<comment type="function">
    <text evidence="1">One of the early assembly proteins it binds 23S rRNA. One of the proteins that surrounds the polypeptide exit tunnel on the outside of the ribosome. Forms the main docking site for trigger factor binding to the ribosome.</text>
</comment>
<comment type="subunit">
    <text evidence="1">Part of the 50S ribosomal subunit. Contacts protein L29, and trigger factor when it is bound to the ribosome.</text>
</comment>
<comment type="similarity">
    <text evidence="1">Belongs to the universal ribosomal protein uL23 family.</text>
</comment>